<sequence>MLARYLNLIGRRSASPYRPQRLPAKFDNVIVAMSSGVDSSVAAALFAGEFPNTRGVYMQNWSESQSLDDPGKEPCYERDWRDVNRVAKHLNIRVDKVNFEQDYWIDVFEPMLRGYSEGSTPNPDIGCNKFVKFGKLREWLDEKYGTGNYWLVTGHYARVMQEMNGKGLFHLLRSIYRPKDQSYYLSQINSTVLSSLLLPIGHLTKPEVRDLAKYAGLPTAEKPDSQGICFVNNSQHGKFKNFLKHYLPSSPGDIITVDPQSGAKTTWGRHDGLWSYTIGQKVGISMPQADPNYQGTWFVSEKLRDTNEILIVRGRDNPALYSDTMRIENFSSLGPREDTINAFQNTGALTLQFRSLQVPVQIKSCKLNRSADNLDITIHLASKQRAITPGQSCCLYIDDRVLGSGPISHVNNNDTHA</sequence>
<proteinExistence type="evidence at protein level"/>
<comment type="function">
    <text evidence="3 4 5">Catalyzes the 2-thiolation of uridine at the wobble position (U34) of mitochondrial tRNA(Lys), tRNA(Glu) and tRNA(Gln). Required for the formation of 5-taurinomethyl-2-thiouridine (tm5s2U) of mitochondrial tRNA(Lys), tRNA(Glu), and tRNA(Gln) at the wobble position. ATP is required to activate the C2 atom of the wobble base.</text>
</comment>
<comment type="catalytic activity">
    <reaction evidence="3 5">
        <text>5-taurinomethyluridine(34) in tRNA + S-sulfanyl-L-cysteinyl-[protein] + AH2 + ATP = 5-taurinomethyl-2-thiouridine(34) in tRNA + L-cysteinyl-[protein] + A + AMP + diphosphate + H(+)</text>
        <dbReference type="Rhea" id="RHEA:47040"/>
        <dbReference type="Rhea" id="RHEA-COMP:10131"/>
        <dbReference type="Rhea" id="RHEA-COMP:11726"/>
        <dbReference type="Rhea" id="RHEA-COMP:11732"/>
        <dbReference type="Rhea" id="RHEA-COMP:11733"/>
        <dbReference type="ChEBI" id="CHEBI:13193"/>
        <dbReference type="ChEBI" id="CHEBI:15378"/>
        <dbReference type="ChEBI" id="CHEBI:17499"/>
        <dbReference type="ChEBI" id="CHEBI:29950"/>
        <dbReference type="ChEBI" id="CHEBI:30616"/>
        <dbReference type="ChEBI" id="CHEBI:33019"/>
        <dbReference type="ChEBI" id="CHEBI:61963"/>
        <dbReference type="ChEBI" id="CHEBI:87171"/>
        <dbReference type="ChEBI" id="CHEBI:87172"/>
        <dbReference type="ChEBI" id="CHEBI:456215"/>
        <dbReference type="EC" id="2.8.1.14"/>
    </reaction>
</comment>
<comment type="interaction">
    <interactant intactId="EBI-19558">
        <id>Q12093</id>
    </interactant>
    <interactant intactId="EBI-8586">
        <id>P19882</id>
        <label>HSP60</label>
    </interactant>
    <organismsDiffer>false</organismsDiffer>
    <experiments>2</experiments>
</comment>
<comment type="subcellular location">
    <subcellularLocation>
        <location evidence="3 4">Mitochondrion</location>
    </subcellularLocation>
</comment>
<comment type="miscellaneous">
    <text evidence="2">Present with 1510 molecules/cell in log phase SD medium.</text>
</comment>
<comment type="miscellaneous">
    <text evidence="1">During the reaction, ATP is used to activate the C2 atom of U34 by adenylation. After this, the persulfide sulfur on the catalytic cysteine is transferred to the C2 atom of the wobble base (U34) of mitochondrial tRNA(Lys), tRNA(Glu) and tRNA(Gln). The reaction probably involves hydrogen sulfide that is generated from the persulfide intermediate and that acts as a nucleophile towards the activated C2 atom on U34. Subsequently, a transient disulfide bond is formed between the two active site cysteine residues (By similarity).</text>
</comment>
<comment type="similarity">
    <text evidence="6">Belongs to the MnmA/TRMU family.</text>
</comment>
<comment type="caution">
    <text evidence="6">Was originally thought to be a 5-methylaminomethyl-2-methyltransferase involved in tRNA modification.</text>
</comment>
<name>MTU1_YEAST</name>
<accession>Q12093</accession>
<accession>D6VRW0</accession>
<accession>Q6IUF4</accession>
<evidence type="ECO:0000250" key="1"/>
<evidence type="ECO:0000269" key="2">
    <source>
    </source>
</evidence>
<evidence type="ECO:0000269" key="3">
    <source>
    </source>
</evidence>
<evidence type="ECO:0000269" key="4">
    <source>
    </source>
</evidence>
<evidence type="ECO:0000269" key="5">
    <source>
    </source>
</evidence>
<evidence type="ECO:0000305" key="6"/>
<gene>
    <name type="primary">SLM3</name>
    <name type="synonym">MTO2</name>
    <name type="synonym">MTU1</name>
    <name type="ordered locus">YDL033C</name>
    <name type="ORF">D2761</name>
</gene>
<protein>
    <recommendedName>
        <fullName>Mitochondrial tRNA-specific 2-thiouridylase 1</fullName>
        <ecNumber evidence="3 5">2.8.1.14</ecNumber>
    </recommendedName>
    <alternativeName>
        <fullName>Mitochondrial translation optimization protein 2</fullName>
    </alternativeName>
    <alternativeName>
        <fullName>Synthetic lethal with MSS4 3</fullName>
    </alternativeName>
</protein>
<dbReference type="EC" id="2.8.1.14" evidence="3 5"/>
<dbReference type="EMBL" id="AY624369">
    <property type="protein sequence ID" value="AAT44736.1"/>
    <property type="molecule type" value="Genomic_DNA"/>
</dbReference>
<dbReference type="EMBL" id="Z71781">
    <property type="protein sequence ID" value="CAA96456.1"/>
    <property type="molecule type" value="Genomic_DNA"/>
</dbReference>
<dbReference type="EMBL" id="Z74081">
    <property type="protein sequence ID" value="CAA98591.1"/>
    <property type="molecule type" value="Genomic_DNA"/>
</dbReference>
<dbReference type="EMBL" id="BK006938">
    <property type="protein sequence ID" value="DAA11820.1"/>
    <property type="molecule type" value="Genomic_DNA"/>
</dbReference>
<dbReference type="PIR" id="S67566">
    <property type="entry name" value="S67566"/>
</dbReference>
<dbReference type="RefSeq" id="NP_010251.1">
    <property type="nucleotide sequence ID" value="NM_001180092.1"/>
</dbReference>
<dbReference type="SMR" id="Q12093"/>
<dbReference type="BioGRID" id="32024">
    <property type="interactions" value="543"/>
</dbReference>
<dbReference type="FunCoup" id="Q12093">
    <property type="interactions" value="446"/>
</dbReference>
<dbReference type="IntAct" id="Q12093">
    <property type="interactions" value="3"/>
</dbReference>
<dbReference type="STRING" id="4932.YDL033C"/>
<dbReference type="GlyGen" id="Q12093">
    <property type="glycosylation" value="1 site"/>
</dbReference>
<dbReference type="iPTMnet" id="Q12093"/>
<dbReference type="PaxDb" id="4932-YDL033C"/>
<dbReference type="PeptideAtlas" id="Q12093"/>
<dbReference type="EnsemblFungi" id="YDL033C_mRNA">
    <property type="protein sequence ID" value="YDL033C"/>
    <property type="gene ID" value="YDL033C"/>
</dbReference>
<dbReference type="GeneID" id="851529"/>
<dbReference type="KEGG" id="sce:YDL033C"/>
<dbReference type="AGR" id="SGD:S000002191"/>
<dbReference type="SGD" id="S000002191">
    <property type="gene designation" value="SLM3"/>
</dbReference>
<dbReference type="VEuPathDB" id="FungiDB:YDL033C"/>
<dbReference type="eggNOG" id="KOG2805">
    <property type="taxonomic scope" value="Eukaryota"/>
</dbReference>
<dbReference type="GeneTree" id="ENSGT00390000014323"/>
<dbReference type="HOGENOM" id="CLU_035188_1_0_1"/>
<dbReference type="InParanoid" id="Q12093"/>
<dbReference type="OMA" id="PFYVWDL"/>
<dbReference type="OrthoDB" id="3685at2759"/>
<dbReference type="BioCyc" id="MetaCyc:G3O-29458-MONOMER"/>
<dbReference type="BioCyc" id="YEAST:G3O-29458-MONOMER"/>
<dbReference type="BioGRID-ORCS" id="851529">
    <property type="hits" value="9 hits in 10 CRISPR screens"/>
</dbReference>
<dbReference type="PRO" id="PR:Q12093"/>
<dbReference type="Proteomes" id="UP000002311">
    <property type="component" value="Chromosome IV"/>
</dbReference>
<dbReference type="RNAct" id="Q12093">
    <property type="molecule type" value="protein"/>
</dbReference>
<dbReference type="GO" id="GO:0005759">
    <property type="term" value="C:mitochondrial matrix"/>
    <property type="evidence" value="ECO:0000304"/>
    <property type="project" value="Reactome"/>
</dbReference>
<dbReference type="GO" id="GO:0005739">
    <property type="term" value="C:mitochondrion"/>
    <property type="evidence" value="ECO:0000314"/>
    <property type="project" value="SGD"/>
</dbReference>
<dbReference type="GO" id="GO:0005524">
    <property type="term" value="F:ATP binding"/>
    <property type="evidence" value="ECO:0007669"/>
    <property type="project" value="UniProtKB-KW"/>
</dbReference>
<dbReference type="GO" id="GO:0016783">
    <property type="term" value="F:sulfurtransferase activity"/>
    <property type="evidence" value="ECO:0000304"/>
    <property type="project" value="Reactome"/>
</dbReference>
<dbReference type="GO" id="GO:0000049">
    <property type="term" value="F:tRNA binding"/>
    <property type="evidence" value="ECO:0007669"/>
    <property type="project" value="UniProtKB-KW"/>
</dbReference>
<dbReference type="GO" id="GO:0061708">
    <property type="term" value="F:tRNA-5-taurinomethyluridine 2-sulfurtransferase"/>
    <property type="evidence" value="ECO:0000315"/>
    <property type="project" value="SGD"/>
</dbReference>
<dbReference type="GO" id="GO:1990799">
    <property type="term" value="P:mitochondrial tRNA wobble position uridine thiolation"/>
    <property type="evidence" value="ECO:0000315"/>
    <property type="project" value="SGD"/>
</dbReference>
<dbReference type="GO" id="GO:0006400">
    <property type="term" value="P:tRNA modification"/>
    <property type="evidence" value="ECO:0000304"/>
    <property type="project" value="Reactome"/>
</dbReference>
<dbReference type="GO" id="GO:0002143">
    <property type="term" value="P:tRNA wobble position uridine thiolation"/>
    <property type="evidence" value="ECO:0000318"/>
    <property type="project" value="GO_Central"/>
</dbReference>
<dbReference type="CDD" id="cd01998">
    <property type="entry name" value="MnmA_TRMU-like"/>
    <property type="match status" value="1"/>
</dbReference>
<dbReference type="FunFam" id="2.40.30.10:FF:000167">
    <property type="entry name" value="Slm3p"/>
    <property type="match status" value="1"/>
</dbReference>
<dbReference type="FunFam" id="2.30.30.280:FF:000001">
    <property type="entry name" value="tRNA-specific 2-thiouridylase MnmA"/>
    <property type="match status" value="1"/>
</dbReference>
<dbReference type="FunFam" id="3.40.50.620:FF:000115">
    <property type="entry name" value="tRNA-specific 2-thiouridylase MnmA"/>
    <property type="match status" value="1"/>
</dbReference>
<dbReference type="Gene3D" id="2.30.30.280">
    <property type="entry name" value="Adenine nucleotide alpha hydrolases-like domains"/>
    <property type="match status" value="1"/>
</dbReference>
<dbReference type="Gene3D" id="3.40.50.620">
    <property type="entry name" value="HUPs"/>
    <property type="match status" value="1"/>
</dbReference>
<dbReference type="Gene3D" id="2.40.30.10">
    <property type="entry name" value="Translation factors"/>
    <property type="match status" value="1"/>
</dbReference>
<dbReference type="InterPro" id="IPR004506">
    <property type="entry name" value="MnmA-like"/>
</dbReference>
<dbReference type="InterPro" id="IPR046885">
    <property type="entry name" value="MnmA-like_C"/>
</dbReference>
<dbReference type="InterPro" id="IPR046884">
    <property type="entry name" value="MnmA-like_central"/>
</dbReference>
<dbReference type="InterPro" id="IPR023382">
    <property type="entry name" value="MnmA-like_central_sf"/>
</dbReference>
<dbReference type="InterPro" id="IPR014729">
    <property type="entry name" value="Rossmann-like_a/b/a_fold"/>
</dbReference>
<dbReference type="NCBIfam" id="NF001138">
    <property type="entry name" value="PRK00143.1"/>
    <property type="match status" value="1"/>
</dbReference>
<dbReference type="NCBIfam" id="TIGR00420">
    <property type="entry name" value="trmU"/>
    <property type="match status" value="1"/>
</dbReference>
<dbReference type="PANTHER" id="PTHR11933:SF5">
    <property type="entry name" value="MITOCHONDRIAL TRNA-SPECIFIC 2-THIOURIDYLASE 1"/>
    <property type="match status" value="1"/>
</dbReference>
<dbReference type="PANTHER" id="PTHR11933">
    <property type="entry name" value="TRNA 5-METHYLAMINOMETHYL-2-THIOURIDYLATE -METHYLTRANSFERASE"/>
    <property type="match status" value="1"/>
</dbReference>
<dbReference type="Pfam" id="PF03054">
    <property type="entry name" value="tRNA_Me_trans"/>
    <property type="match status" value="1"/>
</dbReference>
<dbReference type="Pfam" id="PF20258">
    <property type="entry name" value="tRNA_Me_trans_C"/>
    <property type="match status" value="1"/>
</dbReference>
<dbReference type="Pfam" id="PF20259">
    <property type="entry name" value="tRNA_Me_trans_M"/>
    <property type="match status" value="1"/>
</dbReference>
<dbReference type="SUPFAM" id="SSF52402">
    <property type="entry name" value="Adenine nucleotide alpha hydrolases-like"/>
    <property type="match status" value="1"/>
</dbReference>
<reference key="1">
    <citation type="journal article" date="2005" name="J. Biol. Chem.">
        <title>Mutations in MTO2 related to tRNA modification impair mitochondrial gene expression and protein synthesis in the presence of a paromomycin resistance mutation in mitochondrial 15 S rRNA.</title>
        <authorList>
            <person name="Yan Q."/>
            <person name="Li X."/>
            <person name="Faye G."/>
            <person name="Guan M.-X."/>
        </authorList>
    </citation>
    <scope>NUCLEOTIDE SEQUENCE [GENOMIC DNA]</scope>
    <scope>FUNCTION</scope>
    <scope>SUBCELLULAR LOCATION</scope>
    <source>
        <strain>ATCC 201238 / W303-1B</strain>
    </source>
</reference>
<reference key="2">
    <citation type="journal article" date="1997" name="Nature">
        <title>The nucleotide sequence of Saccharomyces cerevisiae chromosome IV.</title>
        <authorList>
            <person name="Jacq C."/>
            <person name="Alt-Moerbe J."/>
            <person name="Andre B."/>
            <person name="Arnold W."/>
            <person name="Bahr A."/>
            <person name="Ballesta J.P.G."/>
            <person name="Bargues M."/>
            <person name="Baron L."/>
            <person name="Becker A."/>
            <person name="Biteau N."/>
            <person name="Bloecker H."/>
            <person name="Blugeon C."/>
            <person name="Boskovic J."/>
            <person name="Brandt P."/>
            <person name="Brueckner M."/>
            <person name="Buitrago M.J."/>
            <person name="Coster F."/>
            <person name="Delaveau T."/>
            <person name="del Rey F."/>
            <person name="Dujon B."/>
            <person name="Eide L.G."/>
            <person name="Garcia-Cantalejo J.M."/>
            <person name="Goffeau A."/>
            <person name="Gomez-Peris A."/>
            <person name="Granotier C."/>
            <person name="Hanemann V."/>
            <person name="Hankeln T."/>
            <person name="Hoheisel J.D."/>
            <person name="Jaeger W."/>
            <person name="Jimenez A."/>
            <person name="Jonniaux J.-L."/>
            <person name="Kraemer C."/>
            <person name="Kuester H."/>
            <person name="Laamanen P."/>
            <person name="Legros Y."/>
            <person name="Louis E.J."/>
            <person name="Moeller-Rieker S."/>
            <person name="Monnet A."/>
            <person name="Moro M."/>
            <person name="Mueller-Auer S."/>
            <person name="Nussbaumer B."/>
            <person name="Paricio N."/>
            <person name="Paulin L."/>
            <person name="Perea J."/>
            <person name="Perez-Alonso M."/>
            <person name="Perez-Ortin J.E."/>
            <person name="Pohl T.M."/>
            <person name="Prydz H."/>
            <person name="Purnelle B."/>
            <person name="Rasmussen S.W."/>
            <person name="Remacha M.A."/>
            <person name="Revuelta J.L."/>
            <person name="Rieger M."/>
            <person name="Salom D."/>
            <person name="Saluz H.P."/>
            <person name="Saiz J.E."/>
            <person name="Saren A.-M."/>
            <person name="Schaefer M."/>
            <person name="Scharfe M."/>
            <person name="Schmidt E.R."/>
            <person name="Schneider C."/>
            <person name="Scholler P."/>
            <person name="Schwarz S."/>
            <person name="Soler-Mira A."/>
            <person name="Urrestarazu L.A."/>
            <person name="Verhasselt P."/>
            <person name="Vissers S."/>
            <person name="Voet M."/>
            <person name="Volckaert G."/>
            <person name="Wagner G."/>
            <person name="Wambutt R."/>
            <person name="Wedler E."/>
            <person name="Wedler H."/>
            <person name="Woelfl S."/>
            <person name="Harris D.E."/>
            <person name="Bowman S."/>
            <person name="Brown D."/>
            <person name="Churcher C.M."/>
            <person name="Connor R."/>
            <person name="Dedman K."/>
            <person name="Gentles S."/>
            <person name="Hamlin N."/>
            <person name="Hunt S."/>
            <person name="Jones L."/>
            <person name="McDonald S."/>
            <person name="Murphy L.D."/>
            <person name="Niblett D."/>
            <person name="Odell C."/>
            <person name="Oliver K."/>
            <person name="Rajandream M.A."/>
            <person name="Richards C."/>
            <person name="Shore L."/>
            <person name="Walsh S.V."/>
            <person name="Barrell B.G."/>
            <person name="Dietrich F.S."/>
            <person name="Mulligan J.T."/>
            <person name="Allen E."/>
            <person name="Araujo R."/>
            <person name="Aviles E."/>
            <person name="Berno A."/>
            <person name="Carpenter J."/>
            <person name="Chen E."/>
            <person name="Cherry J.M."/>
            <person name="Chung E."/>
            <person name="Duncan M."/>
            <person name="Hunicke-Smith S."/>
            <person name="Hyman R.W."/>
            <person name="Komp C."/>
            <person name="Lashkari D."/>
            <person name="Lew H."/>
            <person name="Lin D."/>
            <person name="Mosedale D."/>
            <person name="Nakahara K."/>
            <person name="Namath A."/>
            <person name="Oefner P."/>
            <person name="Oh C."/>
            <person name="Petel F.X."/>
            <person name="Roberts D."/>
            <person name="Schramm S."/>
            <person name="Schroeder M."/>
            <person name="Shogren T."/>
            <person name="Shroff N."/>
            <person name="Winant A."/>
            <person name="Yelton M.A."/>
            <person name="Botstein D."/>
            <person name="Davis R.W."/>
            <person name="Johnston M."/>
            <person name="Andrews S."/>
            <person name="Brinkman R."/>
            <person name="Cooper J."/>
            <person name="Ding H."/>
            <person name="Du Z."/>
            <person name="Favello A."/>
            <person name="Fulton L."/>
            <person name="Gattung S."/>
            <person name="Greco T."/>
            <person name="Hallsworth K."/>
            <person name="Hawkins J."/>
            <person name="Hillier L.W."/>
            <person name="Jier M."/>
            <person name="Johnson D."/>
            <person name="Johnston L."/>
            <person name="Kirsten J."/>
            <person name="Kucaba T."/>
            <person name="Langston Y."/>
            <person name="Latreille P."/>
            <person name="Le T."/>
            <person name="Mardis E."/>
            <person name="Menezes S."/>
            <person name="Miller N."/>
            <person name="Nhan M."/>
            <person name="Pauley A."/>
            <person name="Peluso D."/>
            <person name="Rifkin L."/>
            <person name="Riles L."/>
            <person name="Taich A."/>
            <person name="Trevaskis E."/>
            <person name="Vignati D."/>
            <person name="Wilcox L."/>
            <person name="Wohldman P."/>
            <person name="Vaudin M."/>
            <person name="Wilson R."/>
            <person name="Waterston R."/>
            <person name="Albermann K."/>
            <person name="Hani J."/>
            <person name="Heumann K."/>
            <person name="Kleine K."/>
            <person name="Mewes H.-W."/>
            <person name="Zollner A."/>
            <person name="Zaccaria P."/>
        </authorList>
    </citation>
    <scope>NUCLEOTIDE SEQUENCE [LARGE SCALE GENOMIC DNA]</scope>
    <source>
        <strain>ATCC 204508 / S288c</strain>
    </source>
</reference>
<reference key="3">
    <citation type="journal article" date="2014" name="G3 (Bethesda)">
        <title>The reference genome sequence of Saccharomyces cerevisiae: Then and now.</title>
        <authorList>
            <person name="Engel S.R."/>
            <person name="Dietrich F.S."/>
            <person name="Fisk D.G."/>
            <person name="Binkley G."/>
            <person name="Balakrishnan R."/>
            <person name="Costanzo M.C."/>
            <person name="Dwight S.S."/>
            <person name="Hitz B.C."/>
            <person name="Karra K."/>
            <person name="Nash R.S."/>
            <person name="Weng S."/>
            <person name="Wong E.D."/>
            <person name="Lloyd P."/>
            <person name="Skrzypek M.S."/>
            <person name="Miyasato S.R."/>
            <person name="Simison M."/>
            <person name="Cherry J.M."/>
        </authorList>
    </citation>
    <scope>GENOME REANNOTATION</scope>
    <source>
        <strain>ATCC 204508 / S288c</strain>
    </source>
</reference>
<reference key="4">
    <citation type="journal article" date="2003" name="Nature">
        <title>Global analysis of protein expression in yeast.</title>
        <authorList>
            <person name="Ghaemmaghami S."/>
            <person name="Huh W.-K."/>
            <person name="Bower K."/>
            <person name="Howson R.W."/>
            <person name="Belle A."/>
            <person name="Dephoure N."/>
            <person name="O'Shea E.K."/>
            <person name="Weissman J.S."/>
        </authorList>
    </citation>
    <scope>LEVEL OF PROTEIN EXPRESSION [LARGE SCALE ANALYSIS]</scope>
</reference>
<reference key="5">
    <citation type="journal article" date="2005" name="J. Biol. Chem.">
        <title>Mitochondria-specific RNA-modifying enzymes responsible for the biosynthesis of the wobble base in mitochondrial tRNAs. Implications for the molecular pathogenesis of human mitochondrial diseases.</title>
        <authorList>
            <person name="Umeda N."/>
            <person name="Suzuki T."/>
            <person name="Yukawa M."/>
            <person name="Ohya Y."/>
            <person name="Shindo H."/>
            <person name="Watanabe K."/>
            <person name="Suzuki T."/>
        </authorList>
    </citation>
    <scope>FUNCTION</scope>
    <scope>CATALYTIC ACTIVITY</scope>
    <scope>SUBCELLULAR LOCATION</scope>
    <scope>MUTAGENESIS OF ASP-38</scope>
</reference>
<reference key="6">
    <citation type="journal article" date="2007" name="FEBS Lett.">
        <title>Deletion of the MTO2 gene related to tRNA modification causes a failure in mitochondrial RNA metabolism in the yeast Saccharomyces cerevisiae.</title>
        <authorList>
            <person name="Wang X."/>
            <person name="Yan Q."/>
            <person name="Guan M.X."/>
        </authorList>
    </citation>
    <scope>FUNCTION</scope>
    <scope>CATALYTIC ACTIVITY</scope>
</reference>
<feature type="chain" id="PRO_0000121711" description="Mitochondrial tRNA-specific 2-thiouridylase 1">
    <location>
        <begin position="1"/>
        <end position="417"/>
    </location>
</feature>
<feature type="region of interest" description="Interaction with target base in tRNA" evidence="1">
    <location>
        <begin position="122"/>
        <end position="124"/>
    </location>
</feature>
<feature type="region of interest" description="Interaction with tRNA" evidence="1">
    <location>
        <begin position="179"/>
        <end position="181"/>
    </location>
</feature>
<feature type="region of interest" description="Interaction with tRNA" evidence="1">
    <location>
        <begin position="354"/>
        <end position="355"/>
    </location>
</feature>
<feature type="active site" description="Nucleophile" evidence="1">
    <location>
        <position position="127"/>
    </location>
</feature>
<feature type="active site" description="Cysteine persulfide intermediate" evidence="1">
    <location>
        <position position="229"/>
    </location>
</feature>
<feature type="binding site" evidence="1">
    <location>
        <begin position="32"/>
        <end position="39"/>
    </location>
    <ligand>
        <name>ATP</name>
        <dbReference type="ChEBI" id="CHEBI:30616"/>
    </ligand>
</feature>
<feature type="binding site" evidence="1">
    <location>
        <position position="58"/>
    </location>
    <ligand>
        <name>ATP</name>
        <dbReference type="ChEBI" id="CHEBI:30616"/>
    </ligand>
</feature>
<feature type="binding site" evidence="1">
    <location>
        <position position="154"/>
    </location>
    <ligand>
        <name>ATP</name>
        <dbReference type="ChEBI" id="CHEBI:30616"/>
    </ligand>
</feature>
<feature type="site" description="Interaction with tRNA" evidence="1">
    <location>
        <position position="155"/>
    </location>
</feature>
<feature type="site" description="Interaction with tRNA" evidence="1">
    <location>
        <position position="281"/>
    </location>
</feature>
<feature type="site" description="Interaction with tRNA" evidence="1">
    <location>
        <position position="391"/>
    </location>
</feature>
<feature type="disulfide bond" description="Alternate" evidence="1">
    <location>
        <begin position="127"/>
        <end position="229"/>
    </location>
</feature>
<feature type="mutagenesis site" description="Loss of activity." evidence="3">
    <original>D</original>
    <variation>A</variation>
    <location>
        <position position="38"/>
    </location>
</feature>
<keyword id="KW-0067">ATP-binding</keyword>
<keyword id="KW-1015">Disulfide bond</keyword>
<keyword id="KW-0496">Mitochondrion</keyword>
<keyword id="KW-0547">Nucleotide-binding</keyword>
<keyword id="KW-1185">Reference proteome</keyword>
<keyword id="KW-0694">RNA-binding</keyword>
<keyword id="KW-0808">Transferase</keyword>
<keyword id="KW-0819">tRNA processing</keyword>
<keyword id="KW-0820">tRNA-binding</keyword>
<organism>
    <name type="scientific">Saccharomyces cerevisiae (strain ATCC 204508 / S288c)</name>
    <name type="common">Baker's yeast</name>
    <dbReference type="NCBI Taxonomy" id="559292"/>
    <lineage>
        <taxon>Eukaryota</taxon>
        <taxon>Fungi</taxon>
        <taxon>Dikarya</taxon>
        <taxon>Ascomycota</taxon>
        <taxon>Saccharomycotina</taxon>
        <taxon>Saccharomycetes</taxon>
        <taxon>Saccharomycetales</taxon>
        <taxon>Saccharomycetaceae</taxon>
        <taxon>Saccharomyces</taxon>
    </lineage>
</organism>